<evidence type="ECO:0000255" key="1">
    <source>
        <dbReference type="HAMAP-Rule" id="MF_01271"/>
    </source>
</evidence>
<gene>
    <name evidence="1" type="primary">nagK</name>
    <name type="ordered locus">E2348C_1211</name>
</gene>
<protein>
    <recommendedName>
        <fullName evidence="1">N-acetyl-D-glucosamine kinase</fullName>
        <ecNumber evidence="1">2.7.1.59</ecNumber>
    </recommendedName>
    <alternativeName>
        <fullName evidence="1">GlcNAc kinase</fullName>
    </alternativeName>
</protein>
<reference key="1">
    <citation type="journal article" date="2009" name="J. Bacteriol.">
        <title>Complete genome sequence and comparative genome analysis of enteropathogenic Escherichia coli O127:H6 strain E2348/69.</title>
        <authorList>
            <person name="Iguchi A."/>
            <person name="Thomson N.R."/>
            <person name="Ogura Y."/>
            <person name="Saunders D."/>
            <person name="Ooka T."/>
            <person name="Henderson I.R."/>
            <person name="Harris D."/>
            <person name="Asadulghani M."/>
            <person name="Kurokawa K."/>
            <person name="Dean P."/>
            <person name="Kenny B."/>
            <person name="Quail M.A."/>
            <person name="Thurston S."/>
            <person name="Dougan G."/>
            <person name="Hayashi T."/>
            <person name="Parkhill J."/>
            <person name="Frankel G."/>
        </authorList>
    </citation>
    <scope>NUCLEOTIDE SEQUENCE [LARGE SCALE GENOMIC DNA]</scope>
    <source>
        <strain>E2348/69 / EPEC</strain>
    </source>
</reference>
<sequence length="303" mass="33109">MYYGFDIGGTKIALGVFDSGRQLQWEKRVPTPRDSYDAFLDAVCELVAEADRRFGCKGSVGIGIPGMPETEDGTLYAANVPAASGKPLRADLSARLDRDVRLDNDANCFALSEAWDDEFTQYSLVMGLILGTGVGGGLIFNGKPITGKSYITGEFGHMRLPVDALTMMGLDFPLRRCGCGQHGCIENYLSGRGFAWLYQHYYHQPLQAPEIIAFYDQGDEQARAHVERYLDLLAVCLGNILTIVDPDLVVIGGGLSNFPAITTQLAERLPRHLLPVARVPRIERARHGDAGGMRGAAFLHLTD</sequence>
<keyword id="KW-0067">ATP-binding</keyword>
<keyword id="KW-0119">Carbohydrate metabolism</keyword>
<keyword id="KW-0418">Kinase</keyword>
<keyword id="KW-0479">Metal-binding</keyword>
<keyword id="KW-0547">Nucleotide-binding</keyword>
<keyword id="KW-1185">Reference proteome</keyword>
<keyword id="KW-0808">Transferase</keyword>
<keyword id="KW-0862">Zinc</keyword>
<organism>
    <name type="scientific">Escherichia coli O127:H6 (strain E2348/69 / EPEC)</name>
    <dbReference type="NCBI Taxonomy" id="574521"/>
    <lineage>
        <taxon>Bacteria</taxon>
        <taxon>Pseudomonadati</taxon>
        <taxon>Pseudomonadota</taxon>
        <taxon>Gammaproteobacteria</taxon>
        <taxon>Enterobacterales</taxon>
        <taxon>Enterobacteriaceae</taxon>
        <taxon>Escherichia</taxon>
    </lineage>
</organism>
<comment type="function">
    <text evidence="1">Catalyzes the phosphorylation of N-acetyl-D-glucosamine (GlcNAc) derived from cell-wall degradation, yielding GlcNAc-6-P.</text>
</comment>
<comment type="catalytic activity">
    <reaction evidence="1">
        <text>N-acetyl-D-glucosamine + ATP = N-acetyl-D-glucosamine 6-phosphate + ADP + H(+)</text>
        <dbReference type="Rhea" id="RHEA:17417"/>
        <dbReference type="ChEBI" id="CHEBI:15378"/>
        <dbReference type="ChEBI" id="CHEBI:30616"/>
        <dbReference type="ChEBI" id="CHEBI:57513"/>
        <dbReference type="ChEBI" id="CHEBI:456216"/>
        <dbReference type="ChEBI" id="CHEBI:506227"/>
        <dbReference type="EC" id="2.7.1.59"/>
    </reaction>
</comment>
<comment type="pathway">
    <text evidence="1">Cell wall biogenesis; peptidoglycan recycling.</text>
</comment>
<comment type="similarity">
    <text evidence="1">Belongs to the ROK (NagC/XylR) family. NagK subfamily.</text>
</comment>
<dbReference type="EC" id="2.7.1.59" evidence="1"/>
<dbReference type="EMBL" id="FM180568">
    <property type="protein sequence ID" value="CAS08759.1"/>
    <property type="molecule type" value="Genomic_DNA"/>
</dbReference>
<dbReference type="RefSeq" id="WP_000291306.1">
    <property type="nucleotide sequence ID" value="NC_011601.1"/>
</dbReference>
<dbReference type="SMR" id="B7UPY3"/>
<dbReference type="KEGG" id="ecg:E2348C_1211"/>
<dbReference type="HOGENOM" id="CLU_036604_0_3_6"/>
<dbReference type="UniPathway" id="UPA00544"/>
<dbReference type="Proteomes" id="UP000008205">
    <property type="component" value="Chromosome"/>
</dbReference>
<dbReference type="GO" id="GO:0005524">
    <property type="term" value="F:ATP binding"/>
    <property type="evidence" value="ECO:0007669"/>
    <property type="project" value="UniProtKB-UniRule"/>
</dbReference>
<dbReference type="GO" id="GO:0045127">
    <property type="term" value="F:N-acetylglucosamine kinase activity"/>
    <property type="evidence" value="ECO:0007669"/>
    <property type="project" value="UniProtKB-UniRule"/>
</dbReference>
<dbReference type="GO" id="GO:0008270">
    <property type="term" value="F:zinc ion binding"/>
    <property type="evidence" value="ECO:0007669"/>
    <property type="project" value="UniProtKB-UniRule"/>
</dbReference>
<dbReference type="GO" id="GO:0006044">
    <property type="term" value="P:N-acetylglucosamine metabolic process"/>
    <property type="evidence" value="ECO:0007669"/>
    <property type="project" value="UniProtKB-UniRule"/>
</dbReference>
<dbReference type="GO" id="GO:0009254">
    <property type="term" value="P:peptidoglycan turnover"/>
    <property type="evidence" value="ECO:0007669"/>
    <property type="project" value="UniProtKB-UniRule"/>
</dbReference>
<dbReference type="CDD" id="cd24057">
    <property type="entry name" value="ASKHA_NBD_ROK_NAGK"/>
    <property type="match status" value="1"/>
</dbReference>
<dbReference type="FunFam" id="3.30.420.40:FF:000049">
    <property type="entry name" value="N-acetyl-D-glucosamine kinase"/>
    <property type="match status" value="1"/>
</dbReference>
<dbReference type="FunFam" id="3.30.420.40:FF:000051">
    <property type="entry name" value="N-acetyl-D-glucosamine kinase"/>
    <property type="match status" value="1"/>
</dbReference>
<dbReference type="Gene3D" id="3.30.420.40">
    <property type="match status" value="2"/>
</dbReference>
<dbReference type="HAMAP" id="MF_01271">
    <property type="entry name" value="GlcNAc_kinase"/>
    <property type="match status" value="1"/>
</dbReference>
<dbReference type="InterPro" id="IPR043129">
    <property type="entry name" value="ATPase_NBD"/>
</dbReference>
<dbReference type="InterPro" id="IPR023505">
    <property type="entry name" value="N-acetyl-D-glucosamine_kinase"/>
</dbReference>
<dbReference type="InterPro" id="IPR000600">
    <property type="entry name" value="ROK"/>
</dbReference>
<dbReference type="InterPro" id="IPR049874">
    <property type="entry name" value="ROK_cs"/>
</dbReference>
<dbReference type="NCBIfam" id="NF009835">
    <property type="entry name" value="PRK13310.1"/>
    <property type="match status" value="1"/>
</dbReference>
<dbReference type="PANTHER" id="PTHR18964:SF162">
    <property type="entry name" value="N-ACETYL-D-GLUCOSAMINE KINASE"/>
    <property type="match status" value="1"/>
</dbReference>
<dbReference type="PANTHER" id="PTHR18964">
    <property type="entry name" value="ROK (REPRESSOR, ORF, KINASE) FAMILY"/>
    <property type="match status" value="1"/>
</dbReference>
<dbReference type="Pfam" id="PF00480">
    <property type="entry name" value="ROK"/>
    <property type="match status" value="1"/>
</dbReference>
<dbReference type="SUPFAM" id="SSF53067">
    <property type="entry name" value="Actin-like ATPase domain"/>
    <property type="match status" value="1"/>
</dbReference>
<dbReference type="PROSITE" id="PS01125">
    <property type="entry name" value="ROK"/>
    <property type="match status" value="1"/>
</dbReference>
<feature type="chain" id="PRO_1000165172" description="N-acetyl-D-glucosamine kinase">
    <location>
        <begin position="1"/>
        <end position="303"/>
    </location>
</feature>
<feature type="binding site" evidence="1">
    <location>
        <begin position="4"/>
        <end position="11"/>
    </location>
    <ligand>
        <name>ATP</name>
        <dbReference type="ChEBI" id="CHEBI:30616"/>
    </ligand>
</feature>
<feature type="binding site" evidence="1">
    <location>
        <begin position="133"/>
        <end position="140"/>
    </location>
    <ligand>
        <name>ATP</name>
        <dbReference type="ChEBI" id="CHEBI:30616"/>
    </ligand>
</feature>
<feature type="binding site" evidence="1">
    <location>
        <position position="157"/>
    </location>
    <ligand>
        <name>Zn(2+)</name>
        <dbReference type="ChEBI" id="CHEBI:29105"/>
    </ligand>
</feature>
<feature type="binding site" evidence="1">
    <location>
        <position position="177"/>
    </location>
    <ligand>
        <name>Zn(2+)</name>
        <dbReference type="ChEBI" id="CHEBI:29105"/>
    </ligand>
</feature>
<feature type="binding site" evidence="1">
    <location>
        <position position="179"/>
    </location>
    <ligand>
        <name>Zn(2+)</name>
        <dbReference type="ChEBI" id="CHEBI:29105"/>
    </ligand>
</feature>
<feature type="binding site" evidence="1">
    <location>
        <position position="184"/>
    </location>
    <ligand>
        <name>Zn(2+)</name>
        <dbReference type="ChEBI" id="CHEBI:29105"/>
    </ligand>
</feature>
<name>NAGK_ECO27</name>
<proteinExistence type="inferred from homology"/>
<accession>B7UPY3</accession>